<reference key="1">
    <citation type="journal article" date="2003" name="Nat. Genet.">
        <title>Comparative analysis of the genome sequences of Bordetella pertussis, Bordetella parapertussis and Bordetella bronchiseptica.</title>
        <authorList>
            <person name="Parkhill J."/>
            <person name="Sebaihia M."/>
            <person name="Preston A."/>
            <person name="Murphy L.D."/>
            <person name="Thomson N.R."/>
            <person name="Harris D.E."/>
            <person name="Holden M.T.G."/>
            <person name="Churcher C.M."/>
            <person name="Bentley S.D."/>
            <person name="Mungall K.L."/>
            <person name="Cerdeno-Tarraga A.-M."/>
            <person name="Temple L."/>
            <person name="James K.D."/>
            <person name="Harris B."/>
            <person name="Quail M.A."/>
            <person name="Achtman M."/>
            <person name="Atkin R."/>
            <person name="Baker S."/>
            <person name="Basham D."/>
            <person name="Bason N."/>
            <person name="Cherevach I."/>
            <person name="Chillingworth T."/>
            <person name="Collins M."/>
            <person name="Cronin A."/>
            <person name="Davis P."/>
            <person name="Doggett J."/>
            <person name="Feltwell T."/>
            <person name="Goble A."/>
            <person name="Hamlin N."/>
            <person name="Hauser H."/>
            <person name="Holroyd S."/>
            <person name="Jagels K."/>
            <person name="Leather S."/>
            <person name="Moule S."/>
            <person name="Norberczak H."/>
            <person name="O'Neil S."/>
            <person name="Ormond D."/>
            <person name="Price C."/>
            <person name="Rabbinowitsch E."/>
            <person name="Rutter S."/>
            <person name="Sanders M."/>
            <person name="Saunders D."/>
            <person name="Seeger K."/>
            <person name="Sharp S."/>
            <person name="Simmonds M."/>
            <person name="Skelton J."/>
            <person name="Squares R."/>
            <person name="Squares S."/>
            <person name="Stevens K."/>
            <person name="Unwin L."/>
            <person name="Whitehead S."/>
            <person name="Barrell B.G."/>
            <person name="Maskell D.J."/>
        </authorList>
    </citation>
    <scope>NUCLEOTIDE SEQUENCE [LARGE SCALE GENOMIC DNA]</scope>
    <source>
        <strain>ATCC BAA-588 / NCTC 13252 / RB50</strain>
    </source>
</reference>
<comment type="catalytic activity">
    <reaction evidence="1">
        <text>1-(5-phospho-beta-D-ribosyl)-ATP + H2O = 1-(5-phospho-beta-D-ribosyl)-5'-AMP + diphosphate + H(+)</text>
        <dbReference type="Rhea" id="RHEA:22828"/>
        <dbReference type="ChEBI" id="CHEBI:15377"/>
        <dbReference type="ChEBI" id="CHEBI:15378"/>
        <dbReference type="ChEBI" id="CHEBI:33019"/>
        <dbReference type="ChEBI" id="CHEBI:59457"/>
        <dbReference type="ChEBI" id="CHEBI:73183"/>
        <dbReference type="EC" id="3.6.1.31"/>
    </reaction>
</comment>
<comment type="pathway">
    <text evidence="1">Amino-acid biosynthesis; L-histidine biosynthesis; L-histidine from 5-phospho-alpha-D-ribose 1-diphosphate: step 2/9.</text>
</comment>
<comment type="subcellular location">
    <subcellularLocation>
        <location evidence="1">Cytoplasm</location>
    </subcellularLocation>
</comment>
<comment type="similarity">
    <text evidence="1">Belongs to the PRA-PH family.</text>
</comment>
<protein>
    <recommendedName>
        <fullName evidence="1">Phosphoribosyl-ATP pyrophosphatase</fullName>
        <shortName evidence="1">PRA-PH</shortName>
        <ecNumber evidence="1">3.6.1.31</ecNumber>
    </recommendedName>
</protein>
<dbReference type="EC" id="3.6.1.31" evidence="1"/>
<dbReference type="EMBL" id="BX640451">
    <property type="protein sequence ID" value="CAE35224.1"/>
    <property type="molecule type" value="Genomic_DNA"/>
</dbReference>
<dbReference type="RefSeq" id="WP_010927225.1">
    <property type="nucleotide sequence ID" value="NC_002927.3"/>
</dbReference>
<dbReference type="SMR" id="Q7WDX7"/>
<dbReference type="KEGG" id="bbr:BB4861"/>
<dbReference type="eggNOG" id="COG0140">
    <property type="taxonomic scope" value="Bacteria"/>
</dbReference>
<dbReference type="HOGENOM" id="CLU_123337_1_2_4"/>
<dbReference type="UniPathway" id="UPA00031">
    <property type="reaction ID" value="UER00007"/>
</dbReference>
<dbReference type="Proteomes" id="UP000001027">
    <property type="component" value="Chromosome"/>
</dbReference>
<dbReference type="GO" id="GO:0005737">
    <property type="term" value="C:cytoplasm"/>
    <property type="evidence" value="ECO:0007669"/>
    <property type="project" value="UniProtKB-SubCell"/>
</dbReference>
<dbReference type="GO" id="GO:0005524">
    <property type="term" value="F:ATP binding"/>
    <property type="evidence" value="ECO:0007669"/>
    <property type="project" value="UniProtKB-KW"/>
</dbReference>
<dbReference type="GO" id="GO:0004636">
    <property type="term" value="F:phosphoribosyl-ATP diphosphatase activity"/>
    <property type="evidence" value="ECO:0007669"/>
    <property type="project" value="UniProtKB-UniRule"/>
</dbReference>
<dbReference type="GO" id="GO:0000105">
    <property type="term" value="P:L-histidine biosynthetic process"/>
    <property type="evidence" value="ECO:0007669"/>
    <property type="project" value="UniProtKB-UniRule"/>
</dbReference>
<dbReference type="CDD" id="cd11534">
    <property type="entry name" value="NTP-PPase_HisIE_like"/>
    <property type="match status" value="1"/>
</dbReference>
<dbReference type="Gene3D" id="1.10.287.1080">
    <property type="entry name" value="MazG-like"/>
    <property type="match status" value="1"/>
</dbReference>
<dbReference type="HAMAP" id="MF_01020">
    <property type="entry name" value="HisE"/>
    <property type="match status" value="1"/>
</dbReference>
<dbReference type="InterPro" id="IPR008179">
    <property type="entry name" value="HisE"/>
</dbReference>
<dbReference type="InterPro" id="IPR021130">
    <property type="entry name" value="PRib-ATP_PPHydrolase-like"/>
</dbReference>
<dbReference type="NCBIfam" id="TIGR03188">
    <property type="entry name" value="histidine_hisI"/>
    <property type="match status" value="1"/>
</dbReference>
<dbReference type="NCBIfam" id="NF001611">
    <property type="entry name" value="PRK00400.1-3"/>
    <property type="match status" value="1"/>
</dbReference>
<dbReference type="PANTHER" id="PTHR42945">
    <property type="entry name" value="HISTIDINE BIOSYNTHESIS BIFUNCTIONAL PROTEIN"/>
    <property type="match status" value="1"/>
</dbReference>
<dbReference type="PANTHER" id="PTHR42945:SF9">
    <property type="entry name" value="HISTIDINE BIOSYNTHESIS BIFUNCTIONAL PROTEIN HISIE"/>
    <property type="match status" value="1"/>
</dbReference>
<dbReference type="Pfam" id="PF01503">
    <property type="entry name" value="PRA-PH"/>
    <property type="match status" value="1"/>
</dbReference>
<dbReference type="SUPFAM" id="SSF101386">
    <property type="entry name" value="all-alpha NTP pyrophosphatases"/>
    <property type="match status" value="1"/>
</dbReference>
<proteinExistence type="inferred from homology"/>
<name>HIS2_BORBR</name>
<evidence type="ECO:0000255" key="1">
    <source>
        <dbReference type="HAMAP-Rule" id="MF_01020"/>
    </source>
</evidence>
<gene>
    <name evidence="1" type="primary">hisE</name>
    <name type="ordered locus">BB4861</name>
</gene>
<sequence>MTPPTAGDDILSRIADTLATRRPEAGGDPQSSYVAKLLSKAPDAFLKKIGEEATELVMAAKDGQPDRIISETADLWFHCLVALTHYNLRPEDVLAELARREGLSGLEEKARRPRD</sequence>
<accession>Q7WDX7</accession>
<keyword id="KW-0028">Amino-acid biosynthesis</keyword>
<keyword id="KW-0067">ATP-binding</keyword>
<keyword id="KW-0963">Cytoplasm</keyword>
<keyword id="KW-0368">Histidine biosynthesis</keyword>
<keyword id="KW-0378">Hydrolase</keyword>
<keyword id="KW-0547">Nucleotide-binding</keyword>
<feature type="chain" id="PRO_0000136347" description="Phosphoribosyl-ATP pyrophosphatase">
    <location>
        <begin position="1"/>
        <end position="115"/>
    </location>
</feature>
<organism>
    <name type="scientific">Bordetella bronchiseptica (strain ATCC BAA-588 / NCTC 13252 / RB50)</name>
    <name type="common">Alcaligenes bronchisepticus</name>
    <dbReference type="NCBI Taxonomy" id="257310"/>
    <lineage>
        <taxon>Bacteria</taxon>
        <taxon>Pseudomonadati</taxon>
        <taxon>Pseudomonadota</taxon>
        <taxon>Betaproteobacteria</taxon>
        <taxon>Burkholderiales</taxon>
        <taxon>Alcaligenaceae</taxon>
        <taxon>Bordetella</taxon>
    </lineage>
</organism>